<proteinExistence type="uncertain"/>
<sequence>MKRCACLSNSPTRHTTVVVPSPVISSCAAAALAISTAVGDWICISVSNTLPSLVSLMLPAPSTSIFSVPLGPKLVSRTDCKPSADVTLTFKAASLLNDSAFGFNNCNDMLLLYLYYNLLLLTASTPLTFTFSTHCTHTLLYIILSVFRSFLTRITTTNTSPSENFATKAKLP</sequence>
<feature type="chain" id="PRO_0000430986" description="Putative uncharacterized membrane protein YDR187C">
    <location>
        <begin position="1"/>
        <end position="172"/>
    </location>
</feature>
<feature type="transmembrane region" description="Helical" evidence="1">
    <location>
        <begin position="109"/>
        <end position="129"/>
    </location>
</feature>
<evidence type="ECO:0000255" key="1"/>
<evidence type="ECO:0000305" key="2"/>
<evidence type="ECO:0000305" key="3">
    <source>
    </source>
</evidence>
<evidence type="ECO:0000312" key="4">
    <source>
        <dbReference type="SGD" id="S000002595"/>
    </source>
</evidence>
<protein>
    <recommendedName>
        <fullName evidence="2">Putative uncharacterized membrane protein YDR187C</fullName>
    </recommendedName>
</protein>
<accession>A0A023PYD7</accession>
<gene>
    <name evidence="4" type="ordered locus">YDR187C</name>
</gene>
<name>YD87C_YEAST</name>
<comment type="subcellular location">
    <subcellularLocation>
        <location evidence="1">Membrane</location>
        <topology evidence="1">Single-pass membrane protein</topology>
    </subcellularLocation>
</comment>
<comment type="miscellaneous">
    <text evidence="2">Partially overlaps CCT6.</text>
</comment>
<comment type="caution">
    <text evidence="3">Product of a dubious gene prediction unlikely to encode a functional protein. Because of that it is not part of the S.cerevisiae S288c complete/reference proteome set.</text>
</comment>
<keyword id="KW-0472">Membrane</keyword>
<keyword id="KW-0812">Transmembrane</keyword>
<keyword id="KW-1133">Transmembrane helix</keyword>
<dbReference type="EMBL" id="KJ412220">
    <property type="protein sequence ID" value="AHX39263.1"/>
    <property type="molecule type" value="Genomic_DNA"/>
</dbReference>
<dbReference type="PIR" id="S69749">
    <property type="entry name" value="S69749"/>
</dbReference>
<dbReference type="STRING" id="4932.YDR187C"/>
<dbReference type="PaxDb" id="4932-YDR187C"/>
<dbReference type="EnsemblFungi" id="YDR187C_mRNA">
    <property type="protein sequence ID" value="YDR187C"/>
    <property type="gene ID" value="YDR187C"/>
</dbReference>
<dbReference type="AGR" id="SGD:S000002595"/>
<dbReference type="SGD" id="S000002595">
    <property type="gene designation" value="YDR187C"/>
</dbReference>
<dbReference type="HOGENOM" id="CLU_1556492_0_0_1"/>
<dbReference type="GO" id="GO:0016020">
    <property type="term" value="C:membrane"/>
    <property type="evidence" value="ECO:0007669"/>
    <property type="project" value="UniProtKB-SubCell"/>
</dbReference>
<organism>
    <name type="scientific">Saccharomyces cerevisiae (strain ATCC 204508 / S288c)</name>
    <name type="common">Baker's yeast</name>
    <dbReference type="NCBI Taxonomy" id="559292"/>
    <lineage>
        <taxon>Eukaryota</taxon>
        <taxon>Fungi</taxon>
        <taxon>Dikarya</taxon>
        <taxon>Ascomycota</taxon>
        <taxon>Saccharomycotina</taxon>
        <taxon>Saccharomycetes</taxon>
        <taxon>Saccharomycetales</taxon>
        <taxon>Saccharomycetaceae</taxon>
        <taxon>Saccharomyces</taxon>
    </lineage>
</organism>
<reference key="1">
    <citation type="journal article" date="1997" name="Nature">
        <title>The nucleotide sequence of Saccharomyces cerevisiae chromosome IV.</title>
        <authorList>
            <person name="Jacq C."/>
            <person name="Alt-Moerbe J."/>
            <person name="Andre B."/>
            <person name="Arnold W."/>
            <person name="Bahr A."/>
            <person name="Ballesta J.P.G."/>
            <person name="Bargues M."/>
            <person name="Baron L."/>
            <person name="Becker A."/>
            <person name="Biteau N."/>
            <person name="Bloecker H."/>
            <person name="Blugeon C."/>
            <person name="Boskovic J."/>
            <person name="Brandt P."/>
            <person name="Brueckner M."/>
            <person name="Buitrago M.J."/>
            <person name="Coster F."/>
            <person name="Delaveau T."/>
            <person name="del Rey F."/>
            <person name="Dujon B."/>
            <person name="Eide L.G."/>
            <person name="Garcia-Cantalejo J.M."/>
            <person name="Goffeau A."/>
            <person name="Gomez-Peris A."/>
            <person name="Granotier C."/>
            <person name="Hanemann V."/>
            <person name="Hankeln T."/>
            <person name="Hoheisel J.D."/>
            <person name="Jaeger W."/>
            <person name="Jimenez A."/>
            <person name="Jonniaux J.-L."/>
            <person name="Kraemer C."/>
            <person name="Kuester H."/>
            <person name="Laamanen P."/>
            <person name="Legros Y."/>
            <person name="Louis E.J."/>
            <person name="Moeller-Rieker S."/>
            <person name="Monnet A."/>
            <person name="Moro M."/>
            <person name="Mueller-Auer S."/>
            <person name="Nussbaumer B."/>
            <person name="Paricio N."/>
            <person name="Paulin L."/>
            <person name="Perea J."/>
            <person name="Perez-Alonso M."/>
            <person name="Perez-Ortin J.E."/>
            <person name="Pohl T.M."/>
            <person name="Prydz H."/>
            <person name="Purnelle B."/>
            <person name="Rasmussen S.W."/>
            <person name="Remacha M.A."/>
            <person name="Revuelta J.L."/>
            <person name="Rieger M."/>
            <person name="Salom D."/>
            <person name="Saluz H.P."/>
            <person name="Saiz J.E."/>
            <person name="Saren A.-M."/>
            <person name="Schaefer M."/>
            <person name="Scharfe M."/>
            <person name="Schmidt E.R."/>
            <person name="Schneider C."/>
            <person name="Scholler P."/>
            <person name="Schwarz S."/>
            <person name="Soler-Mira A."/>
            <person name="Urrestarazu L.A."/>
            <person name="Verhasselt P."/>
            <person name="Vissers S."/>
            <person name="Voet M."/>
            <person name="Volckaert G."/>
            <person name="Wagner G."/>
            <person name="Wambutt R."/>
            <person name="Wedler E."/>
            <person name="Wedler H."/>
            <person name="Woelfl S."/>
            <person name="Harris D.E."/>
            <person name="Bowman S."/>
            <person name="Brown D."/>
            <person name="Churcher C.M."/>
            <person name="Connor R."/>
            <person name="Dedman K."/>
            <person name="Gentles S."/>
            <person name="Hamlin N."/>
            <person name="Hunt S."/>
            <person name="Jones L."/>
            <person name="McDonald S."/>
            <person name="Murphy L.D."/>
            <person name="Niblett D."/>
            <person name="Odell C."/>
            <person name="Oliver K."/>
            <person name="Rajandream M.A."/>
            <person name="Richards C."/>
            <person name="Shore L."/>
            <person name="Walsh S.V."/>
            <person name="Barrell B.G."/>
            <person name="Dietrich F.S."/>
            <person name="Mulligan J.T."/>
            <person name="Allen E."/>
            <person name="Araujo R."/>
            <person name="Aviles E."/>
            <person name="Berno A."/>
            <person name="Carpenter J."/>
            <person name="Chen E."/>
            <person name="Cherry J.M."/>
            <person name="Chung E."/>
            <person name="Duncan M."/>
            <person name="Hunicke-Smith S."/>
            <person name="Hyman R.W."/>
            <person name="Komp C."/>
            <person name="Lashkari D."/>
            <person name="Lew H."/>
            <person name="Lin D."/>
            <person name="Mosedale D."/>
            <person name="Nakahara K."/>
            <person name="Namath A."/>
            <person name="Oefner P."/>
            <person name="Oh C."/>
            <person name="Petel F.X."/>
            <person name="Roberts D."/>
            <person name="Schramm S."/>
            <person name="Schroeder M."/>
            <person name="Shogren T."/>
            <person name="Shroff N."/>
            <person name="Winant A."/>
            <person name="Yelton M.A."/>
            <person name="Botstein D."/>
            <person name="Davis R.W."/>
            <person name="Johnston M."/>
            <person name="Andrews S."/>
            <person name="Brinkman R."/>
            <person name="Cooper J."/>
            <person name="Ding H."/>
            <person name="Du Z."/>
            <person name="Favello A."/>
            <person name="Fulton L."/>
            <person name="Gattung S."/>
            <person name="Greco T."/>
            <person name="Hallsworth K."/>
            <person name="Hawkins J."/>
            <person name="Hillier L.W."/>
            <person name="Jier M."/>
            <person name="Johnson D."/>
            <person name="Johnston L."/>
            <person name="Kirsten J."/>
            <person name="Kucaba T."/>
            <person name="Langston Y."/>
            <person name="Latreille P."/>
            <person name="Le T."/>
            <person name="Mardis E."/>
            <person name="Menezes S."/>
            <person name="Miller N."/>
            <person name="Nhan M."/>
            <person name="Pauley A."/>
            <person name="Peluso D."/>
            <person name="Rifkin L."/>
            <person name="Riles L."/>
            <person name="Taich A."/>
            <person name="Trevaskis E."/>
            <person name="Vignati D."/>
            <person name="Wilcox L."/>
            <person name="Wohldman P."/>
            <person name="Vaudin M."/>
            <person name="Wilson R."/>
            <person name="Waterston R."/>
            <person name="Albermann K."/>
            <person name="Hani J."/>
            <person name="Heumann K."/>
            <person name="Kleine K."/>
            <person name="Mewes H.-W."/>
            <person name="Zollner A."/>
            <person name="Zaccaria P."/>
        </authorList>
    </citation>
    <scope>NUCLEOTIDE SEQUENCE [LARGE SCALE GENOMIC DNA]</scope>
    <source>
        <strain>ATCC 204508 / S288c</strain>
    </source>
</reference>
<reference key="2">
    <citation type="journal article" date="2014" name="G3 (Bethesda)">
        <title>The reference genome sequence of Saccharomyces cerevisiae: Then and now.</title>
        <authorList>
            <person name="Engel S.R."/>
            <person name="Dietrich F.S."/>
            <person name="Fisk D.G."/>
            <person name="Binkley G."/>
            <person name="Balakrishnan R."/>
            <person name="Costanzo M.C."/>
            <person name="Dwight S.S."/>
            <person name="Hitz B.C."/>
            <person name="Karra K."/>
            <person name="Nash R.S."/>
            <person name="Weng S."/>
            <person name="Wong E.D."/>
            <person name="Lloyd P."/>
            <person name="Skrzypek M.S."/>
            <person name="Miyasato S.R."/>
            <person name="Simison M."/>
            <person name="Cherry J.M."/>
        </authorList>
    </citation>
    <scope>GENOME REANNOTATION</scope>
    <source>
        <strain>ATCC 204508 / S288c</strain>
    </source>
</reference>